<dbReference type="EC" id="2.7.1.148" evidence="1"/>
<dbReference type="EMBL" id="CP000939">
    <property type="protein sequence ID" value="ACA44010.1"/>
    <property type="molecule type" value="Genomic_DNA"/>
</dbReference>
<dbReference type="RefSeq" id="WP_003404989.1">
    <property type="nucleotide sequence ID" value="NC_010516.1"/>
</dbReference>
<dbReference type="SMR" id="B1IE03"/>
<dbReference type="KEGG" id="cbb:CLD_0665"/>
<dbReference type="HOGENOM" id="CLU_053057_1_1_9"/>
<dbReference type="UniPathway" id="UPA00056">
    <property type="reaction ID" value="UER00094"/>
</dbReference>
<dbReference type="Proteomes" id="UP000008541">
    <property type="component" value="Chromosome"/>
</dbReference>
<dbReference type="GO" id="GO:0050515">
    <property type="term" value="F:4-(cytidine 5'-diphospho)-2-C-methyl-D-erythritol kinase activity"/>
    <property type="evidence" value="ECO:0007669"/>
    <property type="project" value="UniProtKB-UniRule"/>
</dbReference>
<dbReference type="GO" id="GO:0005524">
    <property type="term" value="F:ATP binding"/>
    <property type="evidence" value="ECO:0007669"/>
    <property type="project" value="UniProtKB-UniRule"/>
</dbReference>
<dbReference type="GO" id="GO:0019288">
    <property type="term" value="P:isopentenyl diphosphate biosynthetic process, methylerythritol 4-phosphate pathway"/>
    <property type="evidence" value="ECO:0007669"/>
    <property type="project" value="UniProtKB-UniRule"/>
</dbReference>
<dbReference type="GO" id="GO:0016114">
    <property type="term" value="P:terpenoid biosynthetic process"/>
    <property type="evidence" value="ECO:0007669"/>
    <property type="project" value="InterPro"/>
</dbReference>
<dbReference type="FunFam" id="3.30.230.10:FF:000029">
    <property type="entry name" value="4-diphosphocytidyl-2-C-methyl-D-erythritol kinase"/>
    <property type="match status" value="1"/>
</dbReference>
<dbReference type="Gene3D" id="3.30.230.10">
    <property type="match status" value="1"/>
</dbReference>
<dbReference type="Gene3D" id="3.30.70.890">
    <property type="entry name" value="GHMP kinase, C-terminal domain"/>
    <property type="match status" value="1"/>
</dbReference>
<dbReference type="HAMAP" id="MF_00061">
    <property type="entry name" value="IspE"/>
    <property type="match status" value="1"/>
</dbReference>
<dbReference type="InterPro" id="IPR013750">
    <property type="entry name" value="GHMP_kinase_C_dom"/>
</dbReference>
<dbReference type="InterPro" id="IPR036554">
    <property type="entry name" value="GHMP_kinase_C_sf"/>
</dbReference>
<dbReference type="InterPro" id="IPR006204">
    <property type="entry name" value="GHMP_kinase_N_dom"/>
</dbReference>
<dbReference type="InterPro" id="IPR004424">
    <property type="entry name" value="IspE"/>
</dbReference>
<dbReference type="InterPro" id="IPR020568">
    <property type="entry name" value="Ribosomal_Su5_D2-typ_SF"/>
</dbReference>
<dbReference type="InterPro" id="IPR014721">
    <property type="entry name" value="Ribsml_uS5_D2-typ_fold_subgr"/>
</dbReference>
<dbReference type="NCBIfam" id="TIGR00154">
    <property type="entry name" value="ispE"/>
    <property type="match status" value="1"/>
</dbReference>
<dbReference type="PANTHER" id="PTHR43527">
    <property type="entry name" value="4-DIPHOSPHOCYTIDYL-2-C-METHYL-D-ERYTHRITOL KINASE, CHLOROPLASTIC"/>
    <property type="match status" value="1"/>
</dbReference>
<dbReference type="PANTHER" id="PTHR43527:SF2">
    <property type="entry name" value="4-DIPHOSPHOCYTIDYL-2-C-METHYL-D-ERYTHRITOL KINASE, CHLOROPLASTIC"/>
    <property type="match status" value="1"/>
</dbReference>
<dbReference type="Pfam" id="PF08544">
    <property type="entry name" value="GHMP_kinases_C"/>
    <property type="match status" value="1"/>
</dbReference>
<dbReference type="Pfam" id="PF00288">
    <property type="entry name" value="GHMP_kinases_N"/>
    <property type="match status" value="1"/>
</dbReference>
<dbReference type="PIRSF" id="PIRSF010376">
    <property type="entry name" value="IspE"/>
    <property type="match status" value="1"/>
</dbReference>
<dbReference type="SUPFAM" id="SSF55060">
    <property type="entry name" value="GHMP Kinase, C-terminal domain"/>
    <property type="match status" value="1"/>
</dbReference>
<dbReference type="SUPFAM" id="SSF54211">
    <property type="entry name" value="Ribosomal protein S5 domain 2-like"/>
    <property type="match status" value="1"/>
</dbReference>
<name>ISPE_CLOBK</name>
<protein>
    <recommendedName>
        <fullName evidence="1">4-diphosphocytidyl-2-C-methyl-D-erythritol kinase</fullName>
        <shortName evidence="1">CMK</shortName>
        <ecNumber evidence="1">2.7.1.148</ecNumber>
    </recommendedName>
    <alternativeName>
        <fullName evidence="1">4-(cytidine-5'-diphospho)-2-C-methyl-D-erythritol kinase</fullName>
    </alternativeName>
</protein>
<accession>B1IE03</accession>
<gene>
    <name evidence="1" type="primary">ispE</name>
    <name type="ordered locus">CLD_0665</name>
</gene>
<proteinExistence type="inferred from homology"/>
<reference key="1">
    <citation type="journal article" date="2007" name="PLoS ONE">
        <title>Analysis of the neurotoxin complex genes in Clostridium botulinum A1-A4 and B1 strains: BoNT/A3, /Ba4 and /B1 clusters are located within plasmids.</title>
        <authorList>
            <person name="Smith T.J."/>
            <person name="Hill K.K."/>
            <person name="Foley B.T."/>
            <person name="Detter J.C."/>
            <person name="Munk A.C."/>
            <person name="Bruce D.C."/>
            <person name="Doggett N.A."/>
            <person name="Smith L.A."/>
            <person name="Marks J.D."/>
            <person name="Xie G."/>
            <person name="Brettin T.S."/>
        </authorList>
    </citation>
    <scope>NUCLEOTIDE SEQUENCE [LARGE SCALE GENOMIC DNA]</scope>
    <source>
        <strain>Okra / Type B1</strain>
    </source>
</reference>
<organism>
    <name type="scientific">Clostridium botulinum (strain Okra / Type B1)</name>
    <dbReference type="NCBI Taxonomy" id="498213"/>
    <lineage>
        <taxon>Bacteria</taxon>
        <taxon>Bacillati</taxon>
        <taxon>Bacillota</taxon>
        <taxon>Clostridia</taxon>
        <taxon>Eubacteriales</taxon>
        <taxon>Clostridiaceae</taxon>
        <taxon>Clostridium</taxon>
    </lineage>
</organism>
<evidence type="ECO:0000255" key="1">
    <source>
        <dbReference type="HAMAP-Rule" id="MF_00061"/>
    </source>
</evidence>
<sequence length="280" mass="31490">MLSKAHAKINLSLDVIGKRKDGYHLLKMLMQTIDLYDLIEIKKIKKDIIIDCDREYIPKDRRNLAYKAASLFLDRYNIDSGVRINITKNIPVAAGLAGGSTDAATVLKIMRDIFEPDISNEELKEIALDIGADVPFCIEGGTALCEGIGEKITSIKNFKNQILVLVKPNFGLSTKDVYNNLKVEKIYIHPNTTKLIQSIEEDNLESVARNMRNVLENVTLRKYKTLNSIKSNFIELGALGSMMSGSGPSVFGLFDDMLKAQICYDNMKEKYKEVFITRTI</sequence>
<feature type="chain" id="PRO_1000092078" description="4-diphosphocytidyl-2-C-methyl-D-erythritol kinase">
    <location>
        <begin position="1"/>
        <end position="280"/>
    </location>
</feature>
<feature type="active site" evidence="1">
    <location>
        <position position="8"/>
    </location>
</feature>
<feature type="active site" evidence="1">
    <location>
        <position position="133"/>
    </location>
</feature>
<feature type="binding site" evidence="1">
    <location>
        <begin position="91"/>
        <end position="101"/>
    </location>
    <ligand>
        <name>ATP</name>
        <dbReference type="ChEBI" id="CHEBI:30616"/>
    </ligand>
</feature>
<keyword id="KW-0067">ATP-binding</keyword>
<keyword id="KW-0414">Isoprene biosynthesis</keyword>
<keyword id="KW-0418">Kinase</keyword>
<keyword id="KW-0547">Nucleotide-binding</keyword>
<keyword id="KW-0808">Transferase</keyword>
<comment type="function">
    <text evidence="1">Catalyzes the phosphorylation of the position 2 hydroxy group of 4-diphosphocytidyl-2C-methyl-D-erythritol.</text>
</comment>
<comment type="catalytic activity">
    <reaction evidence="1">
        <text>4-CDP-2-C-methyl-D-erythritol + ATP = 4-CDP-2-C-methyl-D-erythritol 2-phosphate + ADP + H(+)</text>
        <dbReference type="Rhea" id="RHEA:18437"/>
        <dbReference type="ChEBI" id="CHEBI:15378"/>
        <dbReference type="ChEBI" id="CHEBI:30616"/>
        <dbReference type="ChEBI" id="CHEBI:57823"/>
        <dbReference type="ChEBI" id="CHEBI:57919"/>
        <dbReference type="ChEBI" id="CHEBI:456216"/>
        <dbReference type="EC" id="2.7.1.148"/>
    </reaction>
</comment>
<comment type="pathway">
    <text evidence="1">Isoprenoid biosynthesis; isopentenyl diphosphate biosynthesis via DXP pathway; isopentenyl diphosphate from 1-deoxy-D-xylulose 5-phosphate: step 3/6.</text>
</comment>
<comment type="similarity">
    <text evidence="1">Belongs to the GHMP kinase family. IspE subfamily.</text>
</comment>